<protein>
    <recommendedName>
        <fullName evidence="1">Small ribosomal subunit protein uS19</fullName>
    </recommendedName>
    <alternativeName>
        <fullName>30S ribosomal protein S19</fullName>
    </alternativeName>
</protein>
<proteinExistence type="inferred from homology"/>
<evidence type="ECO:0000255" key="1">
    <source>
        <dbReference type="HAMAP-Rule" id="MF_00531"/>
    </source>
</evidence>
<gene>
    <name evidence="1" type="primary">rpsS</name>
    <name type="synonym">rps19</name>
</gene>
<feature type="chain" id="PRO_0000129768" description="Small ribosomal subunit protein uS19">
    <location>
        <begin position="1"/>
        <end position="219"/>
    </location>
</feature>
<feature type="region of interest" description="Unknown">
    <location>
        <begin position="1"/>
        <end position="128"/>
    </location>
</feature>
<feature type="region of interest" description="Small ribosomal subunit protein uS19">
    <location>
        <begin position="129"/>
        <end position="219"/>
    </location>
</feature>
<reference key="1">
    <citation type="journal article" date="2000" name="J. Mol. Evol.">
        <title>Phylogenetic depth of the bacterial genera Aquifex and Thermotoga inferred from analysis of ribosomal protein, elongation factor, and RNA polymerase subunit sequences.</title>
        <authorList>
            <person name="Bocchetta M."/>
            <person name="Gribaldo S."/>
            <person name="Sanangelantoni A.M."/>
            <person name="Cammarano P."/>
        </authorList>
    </citation>
    <scope>NUCLEOTIDE SEQUENCE [GENOMIC DNA]</scope>
    <source>
        <strain>DSM 6858 / JCM 9492 / Kol5A</strain>
    </source>
</reference>
<comment type="function">
    <text evidence="1">Protein S19 forms a complex with S13 that binds strongly to the 16S ribosomal RNA.</text>
</comment>
<comment type="similarity">
    <text evidence="1">Belongs to the universal ribosomal protein uS19 family.</text>
</comment>
<accession>Q9ZI46</accession>
<dbReference type="EMBL" id="AF040100">
    <property type="protein sequence ID" value="AAD08789.1"/>
    <property type="molecule type" value="Genomic_DNA"/>
</dbReference>
<dbReference type="SMR" id="Q9ZI46"/>
<dbReference type="GO" id="GO:0005737">
    <property type="term" value="C:cytoplasm"/>
    <property type="evidence" value="ECO:0007669"/>
    <property type="project" value="UniProtKB-ARBA"/>
</dbReference>
<dbReference type="GO" id="GO:0015935">
    <property type="term" value="C:small ribosomal subunit"/>
    <property type="evidence" value="ECO:0007669"/>
    <property type="project" value="InterPro"/>
</dbReference>
<dbReference type="GO" id="GO:0019843">
    <property type="term" value="F:rRNA binding"/>
    <property type="evidence" value="ECO:0007669"/>
    <property type="project" value="UniProtKB-UniRule"/>
</dbReference>
<dbReference type="GO" id="GO:0003735">
    <property type="term" value="F:structural constituent of ribosome"/>
    <property type="evidence" value="ECO:0007669"/>
    <property type="project" value="InterPro"/>
</dbReference>
<dbReference type="GO" id="GO:0000028">
    <property type="term" value="P:ribosomal small subunit assembly"/>
    <property type="evidence" value="ECO:0007669"/>
    <property type="project" value="TreeGrafter"/>
</dbReference>
<dbReference type="GO" id="GO:0006412">
    <property type="term" value="P:translation"/>
    <property type="evidence" value="ECO:0007669"/>
    <property type="project" value="UniProtKB-UniRule"/>
</dbReference>
<dbReference type="FunFam" id="3.30.860.10:FF:000001">
    <property type="entry name" value="30S ribosomal protein S19"/>
    <property type="match status" value="1"/>
</dbReference>
<dbReference type="Gene3D" id="3.30.860.10">
    <property type="entry name" value="30s Ribosomal Protein S19, Chain A"/>
    <property type="match status" value="1"/>
</dbReference>
<dbReference type="HAMAP" id="MF_00531">
    <property type="entry name" value="Ribosomal_uS19"/>
    <property type="match status" value="1"/>
</dbReference>
<dbReference type="InterPro" id="IPR002222">
    <property type="entry name" value="Ribosomal_uS19"/>
</dbReference>
<dbReference type="InterPro" id="IPR005732">
    <property type="entry name" value="Ribosomal_uS19_bac-type"/>
</dbReference>
<dbReference type="InterPro" id="IPR020934">
    <property type="entry name" value="Ribosomal_uS19_CS"/>
</dbReference>
<dbReference type="InterPro" id="IPR023575">
    <property type="entry name" value="Ribosomal_uS19_SF"/>
</dbReference>
<dbReference type="NCBIfam" id="TIGR01050">
    <property type="entry name" value="rpsS_bact"/>
    <property type="match status" value="1"/>
</dbReference>
<dbReference type="PANTHER" id="PTHR11880">
    <property type="entry name" value="RIBOSOMAL PROTEIN S19P FAMILY MEMBER"/>
    <property type="match status" value="1"/>
</dbReference>
<dbReference type="PANTHER" id="PTHR11880:SF8">
    <property type="entry name" value="SMALL RIBOSOMAL SUBUNIT PROTEIN US19M"/>
    <property type="match status" value="1"/>
</dbReference>
<dbReference type="Pfam" id="PF00203">
    <property type="entry name" value="Ribosomal_S19"/>
    <property type="match status" value="1"/>
</dbReference>
<dbReference type="PRINTS" id="PR00975">
    <property type="entry name" value="RIBOSOMALS19"/>
</dbReference>
<dbReference type="SUPFAM" id="SSF54570">
    <property type="entry name" value="Ribosomal protein S19"/>
    <property type="match status" value="1"/>
</dbReference>
<dbReference type="PROSITE" id="PS00323">
    <property type="entry name" value="RIBOSOMAL_S19"/>
    <property type="match status" value="1"/>
</dbReference>
<organism>
    <name type="scientific">Aquifex pyrophilus</name>
    <dbReference type="NCBI Taxonomy" id="2714"/>
    <lineage>
        <taxon>Bacteria</taxon>
        <taxon>Pseudomonadati</taxon>
        <taxon>Aquificota</taxon>
        <taxon>Aquificia</taxon>
        <taxon>Aquificales</taxon>
        <taxon>Aquificaceae</taxon>
        <taxon>Aquifex</taxon>
    </lineage>
</organism>
<keyword id="KW-0687">Ribonucleoprotein</keyword>
<keyword id="KW-0689">Ribosomal protein</keyword>
<keyword id="KW-0694">RNA-binding</keyword>
<keyword id="KW-0699">rRNA-binding</keyword>
<sequence length="219" mass="25965">MGFKGAWNKRNRLIENPEEYYRLYKKLQRAYKLVREAIKRYGSFELLKGKTSLRDLEELLEERKQVLENLKKQLREAHKGKPKIEAEGDEQLKELIREVNRVQSEVRALEIITNRVRKYEEIYAQYKQMTEKKAYVDPKLWMRIRKMNEAGERKVVRTYSRATTIIPEFVGHTIAVHNGKTFIPVYITQDMVGHKLGEFAPTRTFKGHPDKTAKVVKKK</sequence>
<name>RS19_AQUPY</name>